<sequence>MAKIKKGDLVQVITGAKAERGGDRGKQGKVLRVFPDTNRVLVEGINRVTKHTKVGQSQRGTKTGGIEVVEASIHISNVALVDPSTKKPTRVGFRTETVERNGKKREVRVRVAKSSGKDI</sequence>
<reference key="1">
    <citation type="journal article" date="2013" name="Stand. Genomic Sci.">
        <title>Complete genome sequence of Arthrobacter sp. strain FB24.</title>
        <authorList>
            <person name="Nakatsu C.H."/>
            <person name="Barabote R."/>
            <person name="Thompson S."/>
            <person name="Bruce D."/>
            <person name="Detter C."/>
            <person name="Brettin T."/>
            <person name="Han C."/>
            <person name="Beasley F."/>
            <person name="Chen W."/>
            <person name="Konopka A."/>
            <person name="Xie G."/>
        </authorList>
    </citation>
    <scope>NUCLEOTIDE SEQUENCE [LARGE SCALE GENOMIC DNA]</scope>
    <source>
        <strain>FB24</strain>
    </source>
</reference>
<gene>
    <name evidence="1" type="primary">rplX</name>
    <name type="ordered locus">Arth_2964</name>
</gene>
<accession>A0JZ73</accession>
<proteinExistence type="inferred from homology"/>
<dbReference type="EMBL" id="CP000454">
    <property type="protein sequence ID" value="ABK04343.1"/>
    <property type="molecule type" value="Genomic_DNA"/>
</dbReference>
<dbReference type="RefSeq" id="WP_011692800.1">
    <property type="nucleotide sequence ID" value="NC_008541.1"/>
</dbReference>
<dbReference type="SMR" id="A0JZ73"/>
<dbReference type="STRING" id="290399.Arth_2964"/>
<dbReference type="KEGG" id="art:Arth_2964"/>
<dbReference type="eggNOG" id="COG0198">
    <property type="taxonomic scope" value="Bacteria"/>
</dbReference>
<dbReference type="HOGENOM" id="CLU_093315_2_0_11"/>
<dbReference type="OrthoDB" id="9807419at2"/>
<dbReference type="Proteomes" id="UP000000754">
    <property type="component" value="Chromosome"/>
</dbReference>
<dbReference type="GO" id="GO:1990904">
    <property type="term" value="C:ribonucleoprotein complex"/>
    <property type="evidence" value="ECO:0007669"/>
    <property type="project" value="UniProtKB-KW"/>
</dbReference>
<dbReference type="GO" id="GO:0005840">
    <property type="term" value="C:ribosome"/>
    <property type="evidence" value="ECO:0007669"/>
    <property type="project" value="UniProtKB-KW"/>
</dbReference>
<dbReference type="GO" id="GO:0019843">
    <property type="term" value="F:rRNA binding"/>
    <property type="evidence" value="ECO:0007669"/>
    <property type="project" value="UniProtKB-UniRule"/>
</dbReference>
<dbReference type="GO" id="GO:0003735">
    <property type="term" value="F:structural constituent of ribosome"/>
    <property type="evidence" value="ECO:0007669"/>
    <property type="project" value="InterPro"/>
</dbReference>
<dbReference type="GO" id="GO:0006412">
    <property type="term" value="P:translation"/>
    <property type="evidence" value="ECO:0007669"/>
    <property type="project" value="UniProtKB-UniRule"/>
</dbReference>
<dbReference type="CDD" id="cd06089">
    <property type="entry name" value="KOW_RPL26"/>
    <property type="match status" value="1"/>
</dbReference>
<dbReference type="Gene3D" id="2.30.30.30">
    <property type="match status" value="1"/>
</dbReference>
<dbReference type="HAMAP" id="MF_01326_B">
    <property type="entry name" value="Ribosomal_uL24_B"/>
    <property type="match status" value="1"/>
</dbReference>
<dbReference type="InterPro" id="IPR005824">
    <property type="entry name" value="KOW"/>
</dbReference>
<dbReference type="InterPro" id="IPR014722">
    <property type="entry name" value="Rib_uL2_dom2"/>
</dbReference>
<dbReference type="InterPro" id="IPR003256">
    <property type="entry name" value="Ribosomal_uL24"/>
</dbReference>
<dbReference type="InterPro" id="IPR041988">
    <property type="entry name" value="Ribosomal_uL24_KOW"/>
</dbReference>
<dbReference type="InterPro" id="IPR008991">
    <property type="entry name" value="Translation_prot_SH3-like_sf"/>
</dbReference>
<dbReference type="NCBIfam" id="TIGR01079">
    <property type="entry name" value="rplX_bact"/>
    <property type="match status" value="1"/>
</dbReference>
<dbReference type="PANTHER" id="PTHR12903">
    <property type="entry name" value="MITOCHONDRIAL RIBOSOMAL PROTEIN L24"/>
    <property type="match status" value="1"/>
</dbReference>
<dbReference type="Pfam" id="PF00467">
    <property type="entry name" value="KOW"/>
    <property type="match status" value="1"/>
</dbReference>
<dbReference type="Pfam" id="PF17136">
    <property type="entry name" value="ribosomal_L24"/>
    <property type="match status" value="1"/>
</dbReference>
<dbReference type="SUPFAM" id="SSF50104">
    <property type="entry name" value="Translation proteins SH3-like domain"/>
    <property type="match status" value="1"/>
</dbReference>
<name>RL24_ARTS2</name>
<organism>
    <name type="scientific">Arthrobacter sp. (strain FB24)</name>
    <dbReference type="NCBI Taxonomy" id="290399"/>
    <lineage>
        <taxon>Bacteria</taxon>
        <taxon>Bacillati</taxon>
        <taxon>Actinomycetota</taxon>
        <taxon>Actinomycetes</taxon>
        <taxon>Micrococcales</taxon>
        <taxon>Micrococcaceae</taxon>
        <taxon>Arthrobacter</taxon>
    </lineage>
</organism>
<evidence type="ECO:0000255" key="1">
    <source>
        <dbReference type="HAMAP-Rule" id="MF_01326"/>
    </source>
</evidence>
<evidence type="ECO:0000305" key="2"/>
<keyword id="KW-1185">Reference proteome</keyword>
<keyword id="KW-0687">Ribonucleoprotein</keyword>
<keyword id="KW-0689">Ribosomal protein</keyword>
<keyword id="KW-0694">RNA-binding</keyword>
<keyword id="KW-0699">rRNA-binding</keyword>
<comment type="function">
    <text evidence="1">One of two assembly initiator proteins, it binds directly to the 5'-end of the 23S rRNA, where it nucleates assembly of the 50S subunit.</text>
</comment>
<comment type="function">
    <text evidence="1">One of the proteins that surrounds the polypeptide exit tunnel on the outside of the subunit.</text>
</comment>
<comment type="subunit">
    <text evidence="1">Part of the 50S ribosomal subunit.</text>
</comment>
<comment type="similarity">
    <text evidence="1">Belongs to the universal ribosomal protein uL24 family.</text>
</comment>
<feature type="chain" id="PRO_1000052180" description="Large ribosomal subunit protein uL24">
    <location>
        <begin position="1"/>
        <end position="119"/>
    </location>
</feature>
<protein>
    <recommendedName>
        <fullName evidence="1">Large ribosomal subunit protein uL24</fullName>
    </recommendedName>
    <alternativeName>
        <fullName evidence="2">50S ribosomal protein L24</fullName>
    </alternativeName>
</protein>